<reference key="1">
    <citation type="submission" date="2008-02" db="EMBL/GenBank/DDBJ databases">
        <title>Complete sequence of chromosome 1 of Burkholderia cenocepacia MC0-3.</title>
        <authorList>
            <person name="Copeland A."/>
            <person name="Lucas S."/>
            <person name="Lapidus A."/>
            <person name="Barry K."/>
            <person name="Bruce D."/>
            <person name="Goodwin L."/>
            <person name="Glavina del Rio T."/>
            <person name="Dalin E."/>
            <person name="Tice H."/>
            <person name="Pitluck S."/>
            <person name="Chain P."/>
            <person name="Malfatti S."/>
            <person name="Shin M."/>
            <person name="Vergez L."/>
            <person name="Schmutz J."/>
            <person name="Larimer F."/>
            <person name="Land M."/>
            <person name="Hauser L."/>
            <person name="Kyrpides N."/>
            <person name="Mikhailova N."/>
            <person name="Tiedje J."/>
            <person name="Richardson P."/>
        </authorList>
    </citation>
    <scope>NUCLEOTIDE SEQUENCE [LARGE SCALE GENOMIC DNA]</scope>
    <source>
        <strain>MC0-3</strain>
    </source>
</reference>
<name>NUOH_BURO0</name>
<keyword id="KW-0997">Cell inner membrane</keyword>
<keyword id="KW-1003">Cell membrane</keyword>
<keyword id="KW-0472">Membrane</keyword>
<keyword id="KW-0520">NAD</keyword>
<keyword id="KW-0874">Quinone</keyword>
<keyword id="KW-1278">Translocase</keyword>
<keyword id="KW-0812">Transmembrane</keyword>
<keyword id="KW-1133">Transmembrane helix</keyword>
<keyword id="KW-0830">Ubiquinone</keyword>
<comment type="function">
    <text evidence="1">NDH-1 shuttles electrons from NADH, via FMN and iron-sulfur (Fe-S) centers, to quinones in the respiratory chain. The immediate electron acceptor for the enzyme in this species is believed to be ubiquinone. Couples the redox reaction to proton translocation (for every two electrons transferred, four hydrogen ions are translocated across the cytoplasmic membrane), and thus conserves the redox energy in a proton gradient. This subunit may bind ubiquinone.</text>
</comment>
<comment type="catalytic activity">
    <reaction evidence="1">
        <text>a quinone + NADH + 5 H(+)(in) = a quinol + NAD(+) + 4 H(+)(out)</text>
        <dbReference type="Rhea" id="RHEA:57888"/>
        <dbReference type="ChEBI" id="CHEBI:15378"/>
        <dbReference type="ChEBI" id="CHEBI:24646"/>
        <dbReference type="ChEBI" id="CHEBI:57540"/>
        <dbReference type="ChEBI" id="CHEBI:57945"/>
        <dbReference type="ChEBI" id="CHEBI:132124"/>
    </reaction>
</comment>
<comment type="subunit">
    <text evidence="1">NDH-1 is composed of 14 different subunits. Subunits NuoA, H, J, K, L, M, N constitute the membrane sector of the complex.</text>
</comment>
<comment type="subcellular location">
    <subcellularLocation>
        <location evidence="1">Cell inner membrane</location>
        <topology evidence="1">Multi-pass membrane protein</topology>
    </subcellularLocation>
</comment>
<comment type="similarity">
    <text evidence="1">Belongs to the complex I subunit 1 family.</text>
</comment>
<gene>
    <name evidence="1" type="primary">nuoH</name>
    <name type="ordered locus">Bcenmc03_2266</name>
</gene>
<sequence length="355" mass="39260">MSLFDTINAGGAELLGFAWPTVWAVVRILVVSVVILLCVAYLILWERKLIGWMHVRLGPNRVGPGGLLQPIADVLKLLLKEVIQPSAASRWLYLIAPVMTVVPAFAVWAVIPFQAEAVLANVNAGLLYAMAISSIGVYAVILAGWASNSKYAFLGAMRAAAQMVSYEISMGFALVLVLMTAGSLNLSEIVGSQQHGFFAGHGVNFLSWNWLPLLPAFVVYFISGIAETNRHPFDVVEGESEIVAGHMIDYSGMAFALFFLAEYINMIVISALAATLFLGGWDAPFEFLSFIPGIFWLVLKVFALLSVFIWVRATFPRYRYDQIMRLGWKVFLPVTVVWVIVVGFWMMSPLNIWVK</sequence>
<evidence type="ECO:0000255" key="1">
    <source>
        <dbReference type="HAMAP-Rule" id="MF_01350"/>
    </source>
</evidence>
<organism>
    <name type="scientific">Burkholderia orbicola (strain MC0-3)</name>
    <dbReference type="NCBI Taxonomy" id="406425"/>
    <lineage>
        <taxon>Bacteria</taxon>
        <taxon>Pseudomonadati</taxon>
        <taxon>Pseudomonadota</taxon>
        <taxon>Betaproteobacteria</taxon>
        <taxon>Burkholderiales</taxon>
        <taxon>Burkholderiaceae</taxon>
        <taxon>Burkholderia</taxon>
        <taxon>Burkholderia cepacia complex</taxon>
        <taxon>Burkholderia orbicola</taxon>
    </lineage>
</organism>
<protein>
    <recommendedName>
        <fullName evidence="1">NADH-quinone oxidoreductase subunit H</fullName>
        <ecNumber evidence="1">7.1.1.-</ecNumber>
    </recommendedName>
    <alternativeName>
        <fullName evidence="1">NADH dehydrogenase I subunit H</fullName>
    </alternativeName>
    <alternativeName>
        <fullName evidence="1">NDH-1 subunit H</fullName>
    </alternativeName>
</protein>
<dbReference type="EC" id="7.1.1.-" evidence="1"/>
<dbReference type="EMBL" id="CP000958">
    <property type="protein sequence ID" value="ACA91427.1"/>
    <property type="molecule type" value="Genomic_DNA"/>
</dbReference>
<dbReference type="RefSeq" id="WP_006478269.1">
    <property type="nucleotide sequence ID" value="NC_010508.1"/>
</dbReference>
<dbReference type="SMR" id="B1JVN4"/>
<dbReference type="GeneID" id="83049054"/>
<dbReference type="KEGG" id="bcm:Bcenmc03_2266"/>
<dbReference type="HOGENOM" id="CLU_015134_0_1_4"/>
<dbReference type="Proteomes" id="UP000002169">
    <property type="component" value="Chromosome 1"/>
</dbReference>
<dbReference type="GO" id="GO:0005886">
    <property type="term" value="C:plasma membrane"/>
    <property type="evidence" value="ECO:0007669"/>
    <property type="project" value="UniProtKB-SubCell"/>
</dbReference>
<dbReference type="GO" id="GO:0003954">
    <property type="term" value="F:NADH dehydrogenase activity"/>
    <property type="evidence" value="ECO:0007669"/>
    <property type="project" value="TreeGrafter"/>
</dbReference>
<dbReference type="GO" id="GO:0016655">
    <property type="term" value="F:oxidoreductase activity, acting on NAD(P)H, quinone or similar compound as acceptor"/>
    <property type="evidence" value="ECO:0007669"/>
    <property type="project" value="UniProtKB-UniRule"/>
</dbReference>
<dbReference type="GO" id="GO:0048038">
    <property type="term" value="F:quinone binding"/>
    <property type="evidence" value="ECO:0007669"/>
    <property type="project" value="UniProtKB-KW"/>
</dbReference>
<dbReference type="GO" id="GO:0009060">
    <property type="term" value="P:aerobic respiration"/>
    <property type="evidence" value="ECO:0007669"/>
    <property type="project" value="TreeGrafter"/>
</dbReference>
<dbReference type="HAMAP" id="MF_01350">
    <property type="entry name" value="NDH1_NuoH"/>
    <property type="match status" value="1"/>
</dbReference>
<dbReference type="InterPro" id="IPR001694">
    <property type="entry name" value="NADH_UbQ_OxRdtase_su1/FPO"/>
</dbReference>
<dbReference type="InterPro" id="IPR018086">
    <property type="entry name" value="NADH_UbQ_OxRdtase_su1_CS"/>
</dbReference>
<dbReference type="NCBIfam" id="NF004741">
    <property type="entry name" value="PRK06076.1-2"/>
    <property type="match status" value="1"/>
</dbReference>
<dbReference type="NCBIfam" id="NF004742">
    <property type="entry name" value="PRK06076.1-3"/>
    <property type="match status" value="1"/>
</dbReference>
<dbReference type="PANTHER" id="PTHR11432">
    <property type="entry name" value="NADH DEHYDROGENASE SUBUNIT 1"/>
    <property type="match status" value="1"/>
</dbReference>
<dbReference type="PANTHER" id="PTHR11432:SF3">
    <property type="entry name" value="NADH-UBIQUINONE OXIDOREDUCTASE CHAIN 1"/>
    <property type="match status" value="1"/>
</dbReference>
<dbReference type="Pfam" id="PF00146">
    <property type="entry name" value="NADHdh"/>
    <property type="match status" value="1"/>
</dbReference>
<dbReference type="PROSITE" id="PS00668">
    <property type="entry name" value="COMPLEX1_ND1_2"/>
    <property type="match status" value="1"/>
</dbReference>
<accession>B1JVN4</accession>
<proteinExistence type="inferred from homology"/>
<feature type="chain" id="PRO_1000143579" description="NADH-quinone oxidoreductase subunit H">
    <location>
        <begin position="1"/>
        <end position="355"/>
    </location>
</feature>
<feature type="transmembrane region" description="Helical" evidence="1">
    <location>
        <begin position="25"/>
        <end position="45"/>
    </location>
</feature>
<feature type="transmembrane region" description="Helical" evidence="1">
    <location>
        <begin position="91"/>
        <end position="111"/>
    </location>
</feature>
<feature type="transmembrane region" description="Helical" evidence="1">
    <location>
        <begin position="126"/>
        <end position="146"/>
    </location>
</feature>
<feature type="transmembrane region" description="Helical" evidence="1">
    <location>
        <begin position="170"/>
        <end position="190"/>
    </location>
</feature>
<feature type="transmembrane region" description="Helical" evidence="1">
    <location>
        <begin position="205"/>
        <end position="225"/>
    </location>
</feature>
<feature type="transmembrane region" description="Helical" evidence="1">
    <location>
        <begin position="253"/>
        <end position="273"/>
    </location>
</feature>
<feature type="transmembrane region" description="Helical" evidence="1">
    <location>
        <begin position="290"/>
        <end position="310"/>
    </location>
</feature>
<feature type="transmembrane region" description="Helical" evidence="1">
    <location>
        <begin position="330"/>
        <end position="350"/>
    </location>
</feature>